<name>RIMM_LISMF</name>
<comment type="function">
    <text evidence="1">An accessory protein needed during the final step in the assembly of 30S ribosomal subunit, possibly for assembly of the head region. Essential for efficient processing of 16S rRNA. May be needed both before and after RbfA during the maturation of 16S rRNA. It has affinity for free ribosomal 30S subunits but not for 70S ribosomes.</text>
</comment>
<comment type="subunit">
    <text evidence="1">Binds ribosomal protein uS19.</text>
</comment>
<comment type="subcellular location">
    <subcellularLocation>
        <location evidence="1">Cytoplasm</location>
    </subcellularLocation>
</comment>
<comment type="domain">
    <text evidence="1">The PRC barrel domain binds ribosomal protein uS19.</text>
</comment>
<comment type="similarity">
    <text evidence="1">Belongs to the RimM family.</text>
</comment>
<protein>
    <recommendedName>
        <fullName evidence="1">Ribosome maturation factor RimM</fullName>
    </recommendedName>
</protein>
<proteinExistence type="inferred from homology"/>
<accession>Q71YM3</accession>
<dbReference type="EMBL" id="AE017262">
    <property type="protein sequence ID" value="AAT04591.1"/>
    <property type="molecule type" value="Genomic_DNA"/>
</dbReference>
<dbReference type="SMR" id="Q71YM3"/>
<dbReference type="KEGG" id="lmf:LMOf2365_1820"/>
<dbReference type="HOGENOM" id="CLU_077636_3_1_9"/>
<dbReference type="GO" id="GO:0005737">
    <property type="term" value="C:cytoplasm"/>
    <property type="evidence" value="ECO:0007669"/>
    <property type="project" value="UniProtKB-SubCell"/>
</dbReference>
<dbReference type="GO" id="GO:0005840">
    <property type="term" value="C:ribosome"/>
    <property type="evidence" value="ECO:0007669"/>
    <property type="project" value="InterPro"/>
</dbReference>
<dbReference type="GO" id="GO:0043022">
    <property type="term" value="F:ribosome binding"/>
    <property type="evidence" value="ECO:0007669"/>
    <property type="project" value="InterPro"/>
</dbReference>
<dbReference type="GO" id="GO:0042274">
    <property type="term" value="P:ribosomal small subunit biogenesis"/>
    <property type="evidence" value="ECO:0007669"/>
    <property type="project" value="UniProtKB-UniRule"/>
</dbReference>
<dbReference type="GO" id="GO:0006364">
    <property type="term" value="P:rRNA processing"/>
    <property type="evidence" value="ECO:0007669"/>
    <property type="project" value="UniProtKB-UniRule"/>
</dbReference>
<dbReference type="Gene3D" id="2.30.30.240">
    <property type="entry name" value="PRC-barrel domain"/>
    <property type="match status" value="1"/>
</dbReference>
<dbReference type="Gene3D" id="2.40.30.60">
    <property type="entry name" value="RimM"/>
    <property type="match status" value="1"/>
</dbReference>
<dbReference type="HAMAP" id="MF_00014">
    <property type="entry name" value="Ribosome_mat_RimM"/>
    <property type="match status" value="1"/>
</dbReference>
<dbReference type="InterPro" id="IPR027275">
    <property type="entry name" value="PRC-brl_dom"/>
</dbReference>
<dbReference type="InterPro" id="IPR011033">
    <property type="entry name" value="PRC_barrel-like_sf"/>
</dbReference>
<dbReference type="InterPro" id="IPR011961">
    <property type="entry name" value="RimM"/>
</dbReference>
<dbReference type="InterPro" id="IPR002676">
    <property type="entry name" value="RimM_N"/>
</dbReference>
<dbReference type="InterPro" id="IPR036976">
    <property type="entry name" value="RimM_N_sf"/>
</dbReference>
<dbReference type="InterPro" id="IPR009000">
    <property type="entry name" value="Transl_B-barrel_sf"/>
</dbReference>
<dbReference type="NCBIfam" id="TIGR02273">
    <property type="entry name" value="16S_RimM"/>
    <property type="match status" value="1"/>
</dbReference>
<dbReference type="PANTHER" id="PTHR33692">
    <property type="entry name" value="RIBOSOME MATURATION FACTOR RIMM"/>
    <property type="match status" value="1"/>
</dbReference>
<dbReference type="PANTHER" id="PTHR33692:SF1">
    <property type="entry name" value="RIBOSOME MATURATION FACTOR RIMM"/>
    <property type="match status" value="1"/>
</dbReference>
<dbReference type="Pfam" id="PF05239">
    <property type="entry name" value="PRC"/>
    <property type="match status" value="1"/>
</dbReference>
<dbReference type="Pfam" id="PF01782">
    <property type="entry name" value="RimM"/>
    <property type="match status" value="1"/>
</dbReference>
<dbReference type="SUPFAM" id="SSF50346">
    <property type="entry name" value="PRC-barrel domain"/>
    <property type="match status" value="1"/>
</dbReference>
<dbReference type="SUPFAM" id="SSF50447">
    <property type="entry name" value="Translation proteins"/>
    <property type="match status" value="1"/>
</dbReference>
<evidence type="ECO:0000255" key="1">
    <source>
        <dbReference type="HAMAP-Rule" id="MF_00014"/>
    </source>
</evidence>
<feature type="chain" id="PRO_0000163313" description="Ribosome maturation factor RimM">
    <location>
        <begin position="1"/>
        <end position="169"/>
    </location>
</feature>
<feature type="domain" description="PRC barrel" evidence="1">
    <location>
        <begin position="94"/>
        <end position="167"/>
    </location>
</feature>
<sequence length="169" mass="19362">MYNVGKIVNTHGLIGEIRVIATTDFPEERFQVGNTVYLFEKNSKKPEKLIIRSHRKHKNFDLLMFEGFTGIHQVERMKEGVLKIKEAQLTDLEENEFYFHEIIGCIVVTTDGEELGEITEILTPGANDVWVVKGSDKKEKLIPYIADVVKEININDKKITIEVMEGLLD</sequence>
<gene>
    <name evidence="1" type="primary">rimM</name>
    <name type="ordered locus">LMOf2365_1820</name>
</gene>
<organism>
    <name type="scientific">Listeria monocytogenes serotype 4b (strain F2365)</name>
    <dbReference type="NCBI Taxonomy" id="265669"/>
    <lineage>
        <taxon>Bacteria</taxon>
        <taxon>Bacillati</taxon>
        <taxon>Bacillota</taxon>
        <taxon>Bacilli</taxon>
        <taxon>Bacillales</taxon>
        <taxon>Listeriaceae</taxon>
        <taxon>Listeria</taxon>
    </lineage>
</organism>
<reference key="1">
    <citation type="journal article" date="2004" name="Nucleic Acids Res.">
        <title>Whole genome comparisons of serotype 4b and 1/2a strains of the food-borne pathogen Listeria monocytogenes reveal new insights into the core genome components of this species.</title>
        <authorList>
            <person name="Nelson K.E."/>
            <person name="Fouts D.E."/>
            <person name="Mongodin E.F."/>
            <person name="Ravel J."/>
            <person name="DeBoy R.T."/>
            <person name="Kolonay J.F."/>
            <person name="Rasko D.A."/>
            <person name="Angiuoli S.V."/>
            <person name="Gill S.R."/>
            <person name="Paulsen I.T."/>
            <person name="Peterson J.D."/>
            <person name="White O."/>
            <person name="Nelson W.C."/>
            <person name="Nierman W.C."/>
            <person name="Beanan M.J."/>
            <person name="Brinkac L.M."/>
            <person name="Daugherty S.C."/>
            <person name="Dodson R.J."/>
            <person name="Durkin A.S."/>
            <person name="Madupu R."/>
            <person name="Haft D.H."/>
            <person name="Selengut J."/>
            <person name="Van Aken S.E."/>
            <person name="Khouri H.M."/>
            <person name="Fedorova N."/>
            <person name="Forberger H.A."/>
            <person name="Tran B."/>
            <person name="Kathariou S."/>
            <person name="Wonderling L.D."/>
            <person name="Uhlich G.A."/>
            <person name="Bayles D.O."/>
            <person name="Luchansky J.B."/>
            <person name="Fraser C.M."/>
        </authorList>
    </citation>
    <scope>NUCLEOTIDE SEQUENCE [LARGE SCALE GENOMIC DNA]</scope>
    <source>
        <strain>F2365</strain>
    </source>
</reference>
<keyword id="KW-0143">Chaperone</keyword>
<keyword id="KW-0963">Cytoplasm</keyword>
<keyword id="KW-0690">Ribosome biogenesis</keyword>
<keyword id="KW-0698">rRNA processing</keyword>